<protein>
    <recommendedName>
        <fullName evidence="1">GTPase Obg</fullName>
        <ecNumber evidence="1">3.6.5.-</ecNumber>
    </recommendedName>
    <alternativeName>
        <fullName evidence="1">GTP-binding protein Obg</fullName>
    </alternativeName>
</protein>
<organism>
    <name type="scientific">Salinispora tropica (strain ATCC BAA-916 / DSM 44818 / JCM 13857 / NBRC 105044 / CNB-440)</name>
    <dbReference type="NCBI Taxonomy" id="369723"/>
    <lineage>
        <taxon>Bacteria</taxon>
        <taxon>Bacillati</taxon>
        <taxon>Actinomycetota</taxon>
        <taxon>Actinomycetes</taxon>
        <taxon>Micromonosporales</taxon>
        <taxon>Micromonosporaceae</taxon>
        <taxon>Salinispora</taxon>
    </lineage>
</organism>
<reference key="1">
    <citation type="journal article" date="2007" name="Proc. Natl. Acad. Sci. U.S.A.">
        <title>Genome sequencing reveals complex secondary metabolome in the marine actinomycete Salinispora tropica.</title>
        <authorList>
            <person name="Udwary D.W."/>
            <person name="Zeigler L."/>
            <person name="Asolkar R.N."/>
            <person name="Singan V."/>
            <person name="Lapidus A."/>
            <person name="Fenical W."/>
            <person name="Jensen P.R."/>
            <person name="Moore B.S."/>
        </authorList>
    </citation>
    <scope>NUCLEOTIDE SEQUENCE [LARGE SCALE GENOMIC DNA]</scope>
    <source>
        <strain>ATCC BAA-916 / DSM 44818 / JCM 13857 / NBRC 105044 / CNB-440</strain>
    </source>
</reference>
<comment type="function">
    <text evidence="1">An essential GTPase which binds GTP, GDP and possibly (p)ppGpp with moderate affinity, with high nucleotide exchange rates and a fairly low GTP hydrolysis rate. Plays a role in control of the cell cycle, stress response, ribosome biogenesis and in those bacteria that undergo differentiation, in morphogenesis control.</text>
</comment>
<comment type="cofactor">
    <cofactor evidence="1">
        <name>Mg(2+)</name>
        <dbReference type="ChEBI" id="CHEBI:18420"/>
    </cofactor>
</comment>
<comment type="subunit">
    <text evidence="1">Monomer.</text>
</comment>
<comment type="subcellular location">
    <subcellularLocation>
        <location evidence="1">Cytoplasm</location>
    </subcellularLocation>
</comment>
<comment type="similarity">
    <text evidence="1">Belongs to the TRAFAC class OBG-HflX-like GTPase superfamily. OBG GTPase family.</text>
</comment>
<proteinExistence type="inferred from homology"/>
<accession>A4XAG1</accession>
<feature type="chain" id="PRO_0000386218" description="GTPase Obg">
    <location>
        <begin position="1"/>
        <end position="481"/>
    </location>
</feature>
<feature type="domain" description="Obg" evidence="3">
    <location>
        <begin position="2"/>
        <end position="159"/>
    </location>
</feature>
<feature type="domain" description="OBG-type G" evidence="1">
    <location>
        <begin position="160"/>
        <end position="330"/>
    </location>
</feature>
<feature type="domain" description="OCT" evidence="2">
    <location>
        <begin position="348"/>
        <end position="426"/>
    </location>
</feature>
<feature type="region of interest" description="Disordered" evidence="4">
    <location>
        <begin position="439"/>
        <end position="481"/>
    </location>
</feature>
<feature type="compositionally biased region" description="Basic and acidic residues" evidence="4">
    <location>
        <begin position="439"/>
        <end position="452"/>
    </location>
</feature>
<feature type="compositionally biased region" description="Acidic residues" evidence="4">
    <location>
        <begin position="468"/>
        <end position="481"/>
    </location>
</feature>
<feature type="binding site" evidence="1">
    <location>
        <begin position="166"/>
        <end position="173"/>
    </location>
    <ligand>
        <name>GTP</name>
        <dbReference type="ChEBI" id="CHEBI:37565"/>
    </ligand>
</feature>
<feature type="binding site" evidence="1">
    <location>
        <position position="173"/>
    </location>
    <ligand>
        <name>Mg(2+)</name>
        <dbReference type="ChEBI" id="CHEBI:18420"/>
    </ligand>
</feature>
<feature type="binding site" evidence="1">
    <location>
        <begin position="191"/>
        <end position="195"/>
    </location>
    <ligand>
        <name>GTP</name>
        <dbReference type="ChEBI" id="CHEBI:37565"/>
    </ligand>
</feature>
<feature type="binding site" evidence="1">
    <location>
        <position position="193"/>
    </location>
    <ligand>
        <name>Mg(2+)</name>
        <dbReference type="ChEBI" id="CHEBI:18420"/>
    </ligand>
</feature>
<feature type="binding site" evidence="1">
    <location>
        <begin position="212"/>
        <end position="215"/>
    </location>
    <ligand>
        <name>GTP</name>
        <dbReference type="ChEBI" id="CHEBI:37565"/>
    </ligand>
</feature>
<feature type="binding site" evidence="1">
    <location>
        <begin position="282"/>
        <end position="285"/>
    </location>
    <ligand>
        <name>GTP</name>
        <dbReference type="ChEBI" id="CHEBI:37565"/>
    </ligand>
</feature>
<feature type="binding site" evidence="1">
    <location>
        <begin position="311"/>
        <end position="313"/>
    </location>
    <ligand>
        <name>GTP</name>
        <dbReference type="ChEBI" id="CHEBI:37565"/>
    </ligand>
</feature>
<gene>
    <name evidence="1" type="primary">obg</name>
    <name type="ordered locus">Strop_3479</name>
</gene>
<sequence>MTTFVDRVVLHLQAGDGGHGCVSVHREKFKPFGGPDGGNGGHGGSVSLVVDPQVHTLLDFHFRPHVKAANGRGGAGSNRDGANGANLVLKVPNGTVVQSGDGTVLADLVGVGTTFEVARGGRGGRGNASLANARRKAPGFAELGEPGDQIDVVLELKSVADVGLVGYPSAGKSSLISVISAAKPKIADYPFTTLVPNLGVVRVDNHTFTVADVPGLIPGAATGKGLGLEFLRHIERCAVLLHVVDTAALETERDPVADIDAIEAELVAYGGLVDRPRLVALNKVDVPDGRDLAEIVRPDLEARGFRVFEVSAATRAGLKELMYAMGELVTAARAAAPPAEPTRIVIRPKAVDDAGFTVEAAPGGTWVVRGTRPERWVRQTNFDNEEAVGYLADRLARLGVEEKLGKAGAQAGDLVRIGEREFDWQPTLYTEFVPGVRGGDQRLAEKSERPSATERLAARKARRQRPEDEAEADEPVGDGEE</sequence>
<name>OBG_SALTO</name>
<evidence type="ECO:0000255" key="1">
    <source>
        <dbReference type="HAMAP-Rule" id="MF_01454"/>
    </source>
</evidence>
<evidence type="ECO:0000255" key="2">
    <source>
        <dbReference type="PROSITE-ProRule" id="PRU01229"/>
    </source>
</evidence>
<evidence type="ECO:0000255" key="3">
    <source>
        <dbReference type="PROSITE-ProRule" id="PRU01231"/>
    </source>
</evidence>
<evidence type="ECO:0000256" key="4">
    <source>
        <dbReference type="SAM" id="MobiDB-lite"/>
    </source>
</evidence>
<dbReference type="EC" id="3.6.5.-" evidence="1"/>
<dbReference type="EMBL" id="CP000667">
    <property type="protein sequence ID" value="ABP55910.1"/>
    <property type="molecule type" value="Genomic_DNA"/>
</dbReference>
<dbReference type="RefSeq" id="WP_012014685.1">
    <property type="nucleotide sequence ID" value="NC_009380.1"/>
</dbReference>
<dbReference type="SMR" id="A4XAG1"/>
<dbReference type="STRING" id="369723.Strop_3479"/>
<dbReference type="KEGG" id="stp:Strop_3479"/>
<dbReference type="PATRIC" id="fig|369723.5.peg.3589"/>
<dbReference type="eggNOG" id="COG0536">
    <property type="taxonomic scope" value="Bacteria"/>
</dbReference>
<dbReference type="HOGENOM" id="CLU_011747_2_1_11"/>
<dbReference type="Proteomes" id="UP000000235">
    <property type="component" value="Chromosome"/>
</dbReference>
<dbReference type="GO" id="GO:0005737">
    <property type="term" value="C:cytoplasm"/>
    <property type="evidence" value="ECO:0007669"/>
    <property type="project" value="UniProtKB-SubCell"/>
</dbReference>
<dbReference type="GO" id="GO:0005525">
    <property type="term" value="F:GTP binding"/>
    <property type="evidence" value="ECO:0007669"/>
    <property type="project" value="UniProtKB-UniRule"/>
</dbReference>
<dbReference type="GO" id="GO:0003924">
    <property type="term" value="F:GTPase activity"/>
    <property type="evidence" value="ECO:0007669"/>
    <property type="project" value="UniProtKB-UniRule"/>
</dbReference>
<dbReference type="GO" id="GO:0000287">
    <property type="term" value="F:magnesium ion binding"/>
    <property type="evidence" value="ECO:0007669"/>
    <property type="project" value="InterPro"/>
</dbReference>
<dbReference type="GO" id="GO:0042254">
    <property type="term" value="P:ribosome biogenesis"/>
    <property type="evidence" value="ECO:0007669"/>
    <property type="project" value="UniProtKB-UniRule"/>
</dbReference>
<dbReference type="CDD" id="cd01898">
    <property type="entry name" value="Obg"/>
    <property type="match status" value="1"/>
</dbReference>
<dbReference type="FunFam" id="2.70.210.12:FF:000001">
    <property type="entry name" value="GTPase Obg"/>
    <property type="match status" value="1"/>
</dbReference>
<dbReference type="Gene3D" id="3.30.300.350">
    <property type="entry name" value="GTP-binding protein OBG, C-terminal domain"/>
    <property type="match status" value="1"/>
</dbReference>
<dbReference type="Gene3D" id="2.70.210.12">
    <property type="entry name" value="GTP1/OBG domain"/>
    <property type="match status" value="1"/>
</dbReference>
<dbReference type="Gene3D" id="3.40.50.300">
    <property type="entry name" value="P-loop containing nucleotide triphosphate hydrolases"/>
    <property type="match status" value="1"/>
</dbReference>
<dbReference type="HAMAP" id="MF_01454">
    <property type="entry name" value="GTPase_Obg"/>
    <property type="match status" value="1"/>
</dbReference>
<dbReference type="InterPro" id="IPR031167">
    <property type="entry name" value="G_OBG"/>
</dbReference>
<dbReference type="InterPro" id="IPR006073">
    <property type="entry name" value="GTP-bd"/>
</dbReference>
<dbReference type="InterPro" id="IPR014100">
    <property type="entry name" value="GTP-bd_Obg/CgtA"/>
</dbReference>
<dbReference type="InterPro" id="IPR036346">
    <property type="entry name" value="GTP-bd_prot_GTP1/OBG_C_sf"/>
</dbReference>
<dbReference type="InterPro" id="IPR006074">
    <property type="entry name" value="GTP1-OBG_CS"/>
</dbReference>
<dbReference type="InterPro" id="IPR006169">
    <property type="entry name" value="GTP1_OBG_dom"/>
</dbReference>
<dbReference type="InterPro" id="IPR036726">
    <property type="entry name" value="GTP1_OBG_dom_sf"/>
</dbReference>
<dbReference type="InterPro" id="IPR045086">
    <property type="entry name" value="OBG_GTPase"/>
</dbReference>
<dbReference type="InterPro" id="IPR015349">
    <property type="entry name" value="OCT_dom"/>
</dbReference>
<dbReference type="InterPro" id="IPR027417">
    <property type="entry name" value="P-loop_NTPase"/>
</dbReference>
<dbReference type="InterPro" id="IPR005225">
    <property type="entry name" value="Small_GTP-bd"/>
</dbReference>
<dbReference type="NCBIfam" id="TIGR02729">
    <property type="entry name" value="Obg_CgtA"/>
    <property type="match status" value="1"/>
</dbReference>
<dbReference type="NCBIfam" id="TIGR03595">
    <property type="entry name" value="Obg_CgtA_exten"/>
    <property type="match status" value="1"/>
</dbReference>
<dbReference type="NCBIfam" id="NF008954">
    <property type="entry name" value="PRK12296.1"/>
    <property type="match status" value="1"/>
</dbReference>
<dbReference type="NCBIfam" id="NF008955">
    <property type="entry name" value="PRK12297.1"/>
    <property type="match status" value="1"/>
</dbReference>
<dbReference type="NCBIfam" id="NF008956">
    <property type="entry name" value="PRK12299.1"/>
    <property type="match status" value="1"/>
</dbReference>
<dbReference type="NCBIfam" id="TIGR00231">
    <property type="entry name" value="small_GTP"/>
    <property type="match status" value="1"/>
</dbReference>
<dbReference type="PANTHER" id="PTHR11702">
    <property type="entry name" value="DEVELOPMENTALLY REGULATED GTP-BINDING PROTEIN-RELATED"/>
    <property type="match status" value="1"/>
</dbReference>
<dbReference type="PANTHER" id="PTHR11702:SF31">
    <property type="entry name" value="MITOCHONDRIAL RIBOSOME-ASSOCIATED GTPASE 2"/>
    <property type="match status" value="1"/>
</dbReference>
<dbReference type="Pfam" id="PF09269">
    <property type="entry name" value="DUF1967"/>
    <property type="match status" value="1"/>
</dbReference>
<dbReference type="Pfam" id="PF01018">
    <property type="entry name" value="GTP1_OBG"/>
    <property type="match status" value="1"/>
</dbReference>
<dbReference type="Pfam" id="PF01926">
    <property type="entry name" value="MMR_HSR1"/>
    <property type="match status" value="1"/>
</dbReference>
<dbReference type="PRINTS" id="PR00326">
    <property type="entry name" value="GTP1OBG"/>
</dbReference>
<dbReference type="SUPFAM" id="SSF102741">
    <property type="entry name" value="Obg GTP-binding protein C-terminal domain"/>
    <property type="match status" value="1"/>
</dbReference>
<dbReference type="SUPFAM" id="SSF82051">
    <property type="entry name" value="Obg GTP-binding protein N-terminal domain"/>
    <property type="match status" value="1"/>
</dbReference>
<dbReference type="SUPFAM" id="SSF52540">
    <property type="entry name" value="P-loop containing nucleoside triphosphate hydrolases"/>
    <property type="match status" value="1"/>
</dbReference>
<dbReference type="PROSITE" id="PS51710">
    <property type="entry name" value="G_OBG"/>
    <property type="match status" value="1"/>
</dbReference>
<dbReference type="PROSITE" id="PS00905">
    <property type="entry name" value="GTP1_OBG"/>
    <property type="match status" value="1"/>
</dbReference>
<dbReference type="PROSITE" id="PS51883">
    <property type="entry name" value="OBG"/>
    <property type="match status" value="1"/>
</dbReference>
<dbReference type="PROSITE" id="PS51881">
    <property type="entry name" value="OCT"/>
    <property type="match status" value="1"/>
</dbReference>
<keyword id="KW-0963">Cytoplasm</keyword>
<keyword id="KW-0342">GTP-binding</keyword>
<keyword id="KW-0378">Hydrolase</keyword>
<keyword id="KW-0460">Magnesium</keyword>
<keyword id="KW-0479">Metal-binding</keyword>
<keyword id="KW-0547">Nucleotide-binding</keyword>
<keyword id="KW-1185">Reference proteome</keyword>